<sequence length="135" mass="14656">MSLIVYFSSRSGNTHRFVERLGVRSSRIPLEASGALQVREPFVLVTPTYGGGSTKGAVPNPVIRFLNDADNRALIRGVIAAGNSNFGEAFCIAGNIISAKCGVPYLYRFELLGTAEDVGNVRNGMEQFWTRQTQA</sequence>
<organism>
    <name type="scientific">Brucella canis (strain ATCC 23365 / NCTC 10854 / RM-666)</name>
    <dbReference type="NCBI Taxonomy" id="483179"/>
    <lineage>
        <taxon>Bacteria</taxon>
        <taxon>Pseudomonadati</taxon>
        <taxon>Pseudomonadota</taxon>
        <taxon>Alphaproteobacteria</taxon>
        <taxon>Hyphomicrobiales</taxon>
        <taxon>Brucellaceae</taxon>
        <taxon>Brucella/Ochrobactrum group</taxon>
        <taxon>Brucella</taxon>
    </lineage>
</organism>
<keyword id="KW-1185">Reference proteome</keyword>
<name>NRDI_BRUC2</name>
<reference key="1">
    <citation type="submission" date="2007-10" db="EMBL/GenBank/DDBJ databases">
        <title>Brucella canis ATCC 23365 whole genome shotgun sequencing project.</title>
        <authorList>
            <person name="Setubal J.C."/>
            <person name="Bowns C."/>
            <person name="Boyle S."/>
            <person name="Crasta O.R."/>
            <person name="Czar M.J."/>
            <person name="Dharmanolla C."/>
            <person name="Gillespie J.J."/>
            <person name="Kenyon R.W."/>
            <person name="Lu J."/>
            <person name="Mane S."/>
            <person name="Mohapatra S."/>
            <person name="Nagrani S."/>
            <person name="Purkayastha A."/>
            <person name="Rajasimha H.K."/>
            <person name="Shallom J.M."/>
            <person name="Shallom S."/>
            <person name="Shukla M."/>
            <person name="Snyder E.E."/>
            <person name="Sobral B.W."/>
            <person name="Wattam A.R."/>
            <person name="Will R."/>
            <person name="Williams K."/>
            <person name="Yoo H."/>
            <person name="Bruce D."/>
            <person name="Detter C."/>
            <person name="Munk C."/>
            <person name="Brettin T.S."/>
        </authorList>
    </citation>
    <scope>NUCLEOTIDE SEQUENCE [LARGE SCALE GENOMIC DNA]</scope>
    <source>
        <strain>ATCC 23365 / NCTC 10854 / RM-666</strain>
    </source>
</reference>
<accession>A9ME65</accession>
<proteinExistence type="inferred from homology"/>
<gene>
    <name evidence="1" type="primary">nrdI</name>
    <name type="ordered locus">BCAN_B0316</name>
</gene>
<dbReference type="EMBL" id="CP000873">
    <property type="protein sequence ID" value="ABX63503.1"/>
    <property type="molecule type" value="Genomic_DNA"/>
</dbReference>
<dbReference type="RefSeq" id="WP_002966273.1">
    <property type="nucleotide sequence ID" value="NC_010104.1"/>
</dbReference>
<dbReference type="SMR" id="A9ME65"/>
<dbReference type="GeneID" id="97535519"/>
<dbReference type="KEGG" id="bcs:BCAN_B0316"/>
<dbReference type="HOGENOM" id="CLU_114845_0_0_5"/>
<dbReference type="PhylomeDB" id="A9ME65"/>
<dbReference type="Proteomes" id="UP000001385">
    <property type="component" value="Chromosome II"/>
</dbReference>
<dbReference type="GO" id="GO:0010181">
    <property type="term" value="F:FMN binding"/>
    <property type="evidence" value="ECO:0007669"/>
    <property type="project" value="InterPro"/>
</dbReference>
<dbReference type="GO" id="GO:0036211">
    <property type="term" value="P:protein modification process"/>
    <property type="evidence" value="ECO:0007669"/>
    <property type="project" value="InterPro"/>
</dbReference>
<dbReference type="Gene3D" id="3.40.50.360">
    <property type="match status" value="1"/>
</dbReference>
<dbReference type="HAMAP" id="MF_00128">
    <property type="entry name" value="NrdI"/>
    <property type="match status" value="1"/>
</dbReference>
<dbReference type="InterPro" id="IPR029039">
    <property type="entry name" value="Flavoprotein-like_sf"/>
</dbReference>
<dbReference type="InterPro" id="IPR020852">
    <property type="entry name" value="RNR_Ib_NrdI_bac"/>
</dbReference>
<dbReference type="InterPro" id="IPR004465">
    <property type="entry name" value="RNR_NrdI"/>
</dbReference>
<dbReference type="NCBIfam" id="TIGR00333">
    <property type="entry name" value="nrdI"/>
    <property type="match status" value="1"/>
</dbReference>
<dbReference type="PANTHER" id="PTHR37297">
    <property type="entry name" value="PROTEIN NRDI"/>
    <property type="match status" value="1"/>
</dbReference>
<dbReference type="PANTHER" id="PTHR37297:SF1">
    <property type="entry name" value="PROTEIN NRDI"/>
    <property type="match status" value="1"/>
</dbReference>
<dbReference type="Pfam" id="PF07972">
    <property type="entry name" value="Flavodoxin_NdrI"/>
    <property type="match status" value="1"/>
</dbReference>
<dbReference type="PIRSF" id="PIRSF005087">
    <property type="entry name" value="NrdI"/>
    <property type="match status" value="1"/>
</dbReference>
<dbReference type="SUPFAM" id="SSF52218">
    <property type="entry name" value="Flavoproteins"/>
    <property type="match status" value="1"/>
</dbReference>
<protein>
    <recommendedName>
        <fullName evidence="1">Protein NrdI</fullName>
    </recommendedName>
</protein>
<comment type="function">
    <text evidence="1">Probably involved in ribonucleotide reductase function.</text>
</comment>
<comment type="similarity">
    <text evidence="1">Belongs to the NrdI family.</text>
</comment>
<feature type="chain" id="PRO_1000076296" description="Protein NrdI">
    <location>
        <begin position="1"/>
        <end position="135"/>
    </location>
</feature>
<evidence type="ECO:0000255" key="1">
    <source>
        <dbReference type="HAMAP-Rule" id="MF_00128"/>
    </source>
</evidence>